<feature type="chain" id="PRO_0000309402" description="UPF0502 protein PA3453">
    <location>
        <begin position="1"/>
        <end position="221"/>
    </location>
</feature>
<evidence type="ECO:0000255" key="1">
    <source>
        <dbReference type="HAMAP-Rule" id="MF_01584"/>
    </source>
</evidence>
<reference key="1">
    <citation type="journal article" date="2000" name="Nature">
        <title>Complete genome sequence of Pseudomonas aeruginosa PAO1, an opportunistic pathogen.</title>
        <authorList>
            <person name="Stover C.K."/>
            <person name="Pham X.-Q.T."/>
            <person name="Erwin A.L."/>
            <person name="Mizoguchi S.D."/>
            <person name="Warrener P."/>
            <person name="Hickey M.J."/>
            <person name="Brinkman F.S.L."/>
            <person name="Hufnagle W.O."/>
            <person name="Kowalik D.J."/>
            <person name="Lagrou M."/>
            <person name="Garber R.L."/>
            <person name="Goltry L."/>
            <person name="Tolentino E."/>
            <person name="Westbrock-Wadman S."/>
            <person name="Yuan Y."/>
            <person name="Brody L.L."/>
            <person name="Coulter S.N."/>
            <person name="Folger K.R."/>
            <person name="Kas A."/>
            <person name="Larbig K."/>
            <person name="Lim R.M."/>
            <person name="Smith K.A."/>
            <person name="Spencer D.H."/>
            <person name="Wong G.K.-S."/>
            <person name="Wu Z."/>
            <person name="Paulsen I.T."/>
            <person name="Reizer J."/>
            <person name="Saier M.H. Jr."/>
            <person name="Hancock R.E.W."/>
            <person name="Lory S."/>
            <person name="Olson M.V."/>
        </authorList>
    </citation>
    <scope>NUCLEOTIDE SEQUENCE [LARGE SCALE GENOMIC DNA]</scope>
    <source>
        <strain>ATCC 15692 / DSM 22644 / CIP 104116 / JCM 14847 / LMG 12228 / 1C / PRS 101 / PAO1</strain>
    </source>
</reference>
<protein>
    <recommendedName>
        <fullName evidence="1">UPF0502 protein PA3453</fullName>
    </recommendedName>
</protein>
<organism>
    <name type="scientific">Pseudomonas aeruginosa (strain ATCC 15692 / DSM 22644 / CIP 104116 / JCM 14847 / LMG 12228 / 1C / PRS 101 / PAO1)</name>
    <dbReference type="NCBI Taxonomy" id="208964"/>
    <lineage>
        <taxon>Bacteria</taxon>
        <taxon>Pseudomonadati</taxon>
        <taxon>Pseudomonadota</taxon>
        <taxon>Gammaproteobacteria</taxon>
        <taxon>Pseudomonadales</taxon>
        <taxon>Pseudomonadaceae</taxon>
        <taxon>Pseudomonas</taxon>
    </lineage>
</organism>
<proteinExistence type="inferred from homology"/>
<name>Y3453_PSEAE</name>
<sequence>MSTEPNSPFVDDPLSAVDARILGSLVEKQATTPETYPLTLNALVLACNQKTSRDPVMNLTPGQVGQSLRQLEGRGLVRLVMGSRADRWEHTLGKGLELVAPQVALLGLLFLRGPQTLNELLTRSNRLHDFDDVEQIRHHLERLAGRGLAVHLERRAGQREERYMHLLGSQADLEAAVEAMGSDPERAAPAALSADAEARIAELETRLAALEERLARLEGGA</sequence>
<gene>
    <name type="ordered locus">PA3453</name>
</gene>
<comment type="similarity">
    <text evidence="1">Belongs to the UPF0502 family.</text>
</comment>
<keyword id="KW-1185">Reference proteome</keyword>
<dbReference type="EMBL" id="AE004091">
    <property type="protein sequence ID" value="AAG06841.1"/>
    <property type="molecule type" value="Genomic_DNA"/>
</dbReference>
<dbReference type="PIR" id="D83213">
    <property type="entry name" value="D83213"/>
</dbReference>
<dbReference type="RefSeq" id="NP_252143.1">
    <property type="nucleotide sequence ID" value="NC_002516.2"/>
</dbReference>
<dbReference type="RefSeq" id="WP_003091932.1">
    <property type="nucleotide sequence ID" value="NZ_QZGE01000037.1"/>
</dbReference>
<dbReference type="SMR" id="Q9HYF3"/>
<dbReference type="FunCoup" id="Q9HYF3">
    <property type="interactions" value="29"/>
</dbReference>
<dbReference type="STRING" id="208964.PA3453"/>
<dbReference type="PaxDb" id="208964-PA3453"/>
<dbReference type="GeneID" id="879030"/>
<dbReference type="KEGG" id="pae:PA3453"/>
<dbReference type="PATRIC" id="fig|208964.12.peg.3615"/>
<dbReference type="PseudoCAP" id="PA3453"/>
<dbReference type="HOGENOM" id="CLU_057831_2_0_6"/>
<dbReference type="InParanoid" id="Q9HYF3"/>
<dbReference type="OrthoDB" id="9784785at2"/>
<dbReference type="PhylomeDB" id="Q9HYF3"/>
<dbReference type="BioCyc" id="PAER208964:G1FZ6-3521-MONOMER"/>
<dbReference type="Proteomes" id="UP000002438">
    <property type="component" value="Chromosome"/>
</dbReference>
<dbReference type="Gene3D" id="1.10.10.10">
    <property type="entry name" value="Winged helix-like DNA-binding domain superfamily/Winged helix DNA-binding domain"/>
    <property type="match status" value="2"/>
</dbReference>
<dbReference type="HAMAP" id="MF_01584">
    <property type="entry name" value="UPF0502"/>
    <property type="match status" value="1"/>
</dbReference>
<dbReference type="InterPro" id="IPR007432">
    <property type="entry name" value="DUF480"/>
</dbReference>
<dbReference type="InterPro" id="IPR036388">
    <property type="entry name" value="WH-like_DNA-bd_sf"/>
</dbReference>
<dbReference type="InterPro" id="IPR036390">
    <property type="entry name" value="WH_DNA-bd_sf"/>
</dbReference>
<dbReference type="PANTHER" id="PTHR38768">
    <property type="entry name" value="UPF0502 PROTEIN YCEH"/>
    <property type="match status" value="1"/>
</dbReference>
<dbReference type="PANTHER" id="PTHR38768:SF1">
    <property type="entry name" value="UPF0502 PROTEIN YCEH"/>
    <property type="match status" value="1"/>
</dbReference>
<dbReference type="Pfam" id="PF04337">
    <property type="entry name" value="DUF480"/>
    <property type="match status" value="1"/>
</dbReference>
<dbReference type="SUPFAM" id="SSF46785">
    <property type="entry name" value="Winged helix' DNA-binding domain"/>
    <property type="match status" value="2"/>
</dbReference>
<accession>Q9HYF3</accession>